<reference key="1">
    <citation type="journal article" date="2000" name="J. Neurochem.">
        <title>Characterization of GAR-2, a novel G protein-linked acetylcholine receptor from Caenorhabditis elegans.</title>
        <authorList>
            <person name="Lee Y.-S."/>
            <person name="Park Y.-S."/>
            <person name="Nam S."/>
            <person name="Suh S.J."/>
            <person name="Lee J."/>
            <person name="Kaang B.-K."/>
            <person name="Cho N.J."/>
        </authorList>
    </citation>
    <scope>NUCLEOTIDE SEQUENCE [MRNA] (ISOFORM B)</scope>
    <scope>TISSUE SPECIFICITY</scope>
    <source>
        <strain>Bristol N2</strain>
    </source>
</reference>
<reference key="2">
    <citation type="journal article" date="2001" name="Biochem. Biophys. Res. Commun.">
        <title>Three functional isoforms of GAR-2, a Caenorhabditis elegans G-protein-linked acetylcholine receptor, are produced by alternative splicing.</title>
        <authorList>
            <person name="Suh S.J."/>
            <person name="Park Y.-S."/>
            <person name="Lee Y.-S."/>
            <person name="Cho T.J."/>
            <person name="Kaang B.-K."/>
            <person name="Cho N.J."/>
        </authorList>
    </citation>
    <scope>NUCLEOTIDE SEQUENCE [MRNA]</scope>
    <scope>FUNCTION</scope>
    <scope>SUBCELLULAR LOCATION</scope>
    <scope>DEVELOPMENTAL STAGE</scope>
</reference>
<reference key="3">
    <citation type="journal article" date="1998" name="Science">
        <title>Genome sequence of the nematode C. elegans: a platform for investigating biology.</title>
        <authorList>
            <consortium name="The C. elegans sequencing consortium"/>
        </authorList>
    </citation>
    <scope>NUCLEOTIDE SEQUENCE [LARGE SCALE GENOMIC DNA]</scope>
    <source>
        <strain>Bristol N2</strain>
    </source>
</reference>
<reference key="4">
    <citation type="journal article" date="2003" name="J. Neurosci.">
        <title>Genetic and cellular basis for acetylcholine inhibition of Caenorhabditis elegans egg-laying behavior.</title>
        <authorList>
            <person name="Bany I.A."/>
            <person name="Dong M.Q."/>
            <person name="Koelle M.R."/>
        </authorList>
    </citation>
    <scope>FUNCTION</scope>
    <scope>DISRUPTION PHENOTYPE</scope>
</reference>
<reference key="5">
    <citation type="journal article" date="2008" name="J. Neurosci.">
        <title>Behavioral impact of neurotransmitter-activated G-protein-coupled receptors: muscarinic and GABAB receptors regulate Caenorhabditis elegans locomotion.</title>
        <authorList>
            <person name="Dittman J.S."/>
            <person name="Kaplan J.M."/>
        </authorList>
    </citation>
    <scope>FUNCTION</scope>
    <scope>SUBCELLULAR LOCATION</scope>
    <scope>TISSUE SPECIFICITY</scope>
    <scope>DISRUPTION PHENOTYPE</scope>
</reference>
<sequence length="627" mass="71483">MAVASVLLALFMLFLSIVTVIGNLAVLLSYYLDKNIRQPTNYFIFSLAISDLLIGLEGIPVYTAFYLNNNEWIWGDVLCDLWLSIDYIVCLASIYTVLGITVDRYYSVKKPATYRNWRTPGRVVLIIIFIWLVPSILFSVSIFGYGTFTGTGRILKETECYVQFMTNPYLNMGMYISYYWTTLFVMLYLYWGIYRAAKKLALKSDQKTKRLALLTEMRRPEVSVRTSDAGNSSSDSPNDTSNSSKCFRTAPPTTTVQTTQTNVGTPPPVFRNHMTLHNNNMDFTKDNEIVRPPTPPDDNTYSNPNFSMISEQLTNGFSRQEPSSVIERESTAPCVSPEPSHASLENEFNENHHAHFKPELSLPFIDADSVSSMVGHDDLRRAMSIRISRSVSMQGTARATPVIEIVENLEEALKICENLEELREDENKNEEEKQKNGLENGGMNHVIIANDEQQPSTSKESEQKEEMTPENHDPNEVKVPLIAVSRVESVKSTAGGKVRRLITQMRSHSIRSKRKANKNKSVLSALNFFQRKKEYKSRSENRARKALRTITFILGSFIILWTPFYVLATIYGFCETCKASPSFNTLYTISYYLCYMNSPLNPFCYAMANQQFKKTLTRIFKGDFRRV</sequence>
<protein>
    <recommendedName>
        <fullName evidence="10">Muscarinic acetylcholine receptor gar-2</fullName>
    </recommendedName>
    <alternativeName>
        <fullName>G-protein-linked acetylcholine receptor 2</fullName>
    </alternativeName>
</protein>
<comment type="function">
    <text evidence="3 6 7 8 9">The muscarinic acetylcholine receptor mediates various cellular responses, including inhibition of adenylate cyclase, breakdown of phosphoinositides and modulation of potassium channels through the action of G proteins (PubMed:11032868, PubMed:11700045). Primary transducing effect is Pi turnover (By similarity). Regulates the activity of ventral cord motor neurons (PubMed:18614679). Couples to the G(o)-alpha G-protein subunit goa-1 to negatively regulate cholinergic receptor activity in the presence of high levels of the neurotransmitter acetylcholine in ventral cord motor neurons (PubMed:18614679). As acetylcholine depolarizes body wall muscles, modulation of acetylcholine levels most likely results in the control locomotory behavior and egg-laying (PubMed:12954868, PubMed:18614679).</text>
</comment>
<comment type="subcellular location">
    <subcellularLocation>
        <location evidence="12">Cell membrane</location>
        <topology evidence="2">Multi-pass membrane protein</topology>
    </subcellularLocation>
    <subcellularLocation>
        <location evidence="9">Cell projection</location>
        <location evidence="9">Axon</location>
    </subcellularLocation>
    <text evidence="9">Diffusely localized in axons.</text>
</comment>
<comment type="alternative products">
    <event type="alternative splicing"/>
    <isoform>
        <id>Q09388-1</id>
        <name evidence="13">a</name>
        <sequence type="displayed"/>
    </isoform>
    <isoform>
        <id>Q09388-2</id>
        <name evidence="14">b</name>
        <name evidence="11">c</name>
        <sequence type="described" ref="VSP_001862"/>
    </isoform>
</comment>
<comment type="tissue specificity">
    <text evidence="6 9">Expressed in putative sensory neurons, many cells of the ventral cord and in the HSN motor neurons (PubMed:11032868). Expressed in some cholinergic motor neurons and GABAergic motor neurons, which are the two major types of ventral cord motor neurons (PubMed:18614679).</text>
</comment>
<comment type="developmental stage">
    <text evidence="6 7">Expressed throughout development from the embryo to the adult (PubMed:11032868, PubMed:11700045). Expressed in the head region of larva (PubMed:11032868).</text>
</comment>
<comment type="disruption phenotype">
    <text evidence="8 9">Egg-laying defect whereby 30% of eggs are laid at an early developmental stage (PubMed:12954868). Increased sensitivity to the acetylcholine esterase inhibitor Aldicarb, which results in accelerated paralysis likely due to enhanced acetylcholine release by ventral cord neurons and enhanced depolarization of muscles on one side of the body (PubMed:18614679). Exploratory behavior is similar to wild-type, but in contrast to wild-type, there is irregular locomotory behavior characterized by a 9.2% increase in speed of locomotion over a 1-minute interval, decreased turning frequency, reduced rate of reversals, and a 25% increase in the maximal distance covered over a 40 second interval (PubMed:18614679). Double knockout with the G-protein coupled receptor for GABA subunit gbb-2 results in a slight increase in sensitivity to Aldicarb and accelerated paralysis 50 minutes following exposure to Aldicarb as compared to the gar-2 and gbb-2 single mutants (PubMed:18614679).</text>
</comment>
<comment type="similarity">
    <text evidence="4">Belongs to the G-protein coupled receptor 1 family. Muscarinic acetylcholine receptor subfamily.</text>
</comment>
<feature type="chain" id="PRO_0000069049" description="Muscarinic acetylcholine receptor gar-2">
    <location>
        <begin position="1"/>
        <end position="627"/>
    </location>
</feature>
<feature type="topological domain" description="Extracellular" evidence="1">
    <location>
        <begin position="1"/>
        <end position="9"/>
    </location>
</feature>
<feature type="transmembrane region" description="Helical; Name=1" evidence="1">
    <location>
        <begin position="10"/>
        <end position="30"/>
    </location>
</feature>
<feature type="topological domain" description="Cytoplasmic" evidence="1">
    <location>
        <begin position="31"/>
        <end position="41"/>
    </location>
</feature>
<feature type="transmembrane region" description="Helical; Name=2" evidence="1">
    <location>
        <begin position="42"/>
        <end position="62"/>
    </location>
</feature>
<feature type="topological domain" description="Extracellular" evidence="1">
    <location>
        <begin position="63"/>
        <end position="81"/>
    </location>
</feature>
<feature type="transmembrane region" description="Helical; Name=3" evidence="1">
    <location>
        <begin position="82"/>
        <end position="102"/>
    </location>
</feature>
<feature type="topological domain" description="Cytoplasmic" evidence="1">
    <location>
        <begin position="103"/>
        <end position="122"/>
    </location>
</feature>
<feature type="transmembrane region" description="Helical; Name=4" evidence="1">
    <location>
        <begin position="123"/>
        <end position="143"/>
    </location>
</feature>
<feature type="topological domain" description="Extracellular" evidence="1">
    <location>
        <begin position="144"/>
        <end position="172"/>
    </location>
</feature>
<feature type="transmembrane region" description="Helical; Name=5" evidence="1">
    <location>
        <begin position="173"/>
        <end position="193"/>
    </location>
</feature>
<feature type="topological domain" description="Cytoplasmic" evidence="1">
    <location>
        <begin position="194"/>
        <end position="549"/>
    </location>
</feature>
<feature type="transmembrane region" description="Helical; Name=6" evidence="1">
    <location>
        <begin position="550"/>
        <end position="570"/>
    </location>
</feature>
<feature type="topological domain" description="Extracellular" evidence="1">
    <location>
        <begin position="571"/>
        <end position="586"/>
    </location>
</feature>
<feature type="transmembrane region" description="Helical; Name=7" evidence="1">
    <location>
        <begin position="587"/>
        <end position="609"/>
    </location>
</feature>
<feature type="topological domain" description="Cytoplasmic" evidence="1">
    <location>
        <begin position="610"/>
        <end position="627"/>
    </location>
</feature>
<feature type="region of interest" description="Disordered" evidence="5">
    <location>
        <begin position="222"/>
        <end position="266"/>
    </location>
</feature>
<feature type="region of interest" description="Disordered" evidence="5">
    <location>
        <begin position="423"/>
        <end position="442"/>
    </location>
</feature>
<feature type="region of interest" description="Disordered" evidence="5">
    <location>
        <begin position="449"/>
        <end position="475"/>
    </location>
</feature>
<feature type="compositionally biased region" description="Low complexity" evidence="5">
    <location>
        <begin position="231"/>
        <end position="264"/>
    </location>
</feature>
<feature type="compositionally biased region" description="Basic and acidic residues" evidence="5">
    <location>
        <begin position="459"/>
        <end position="475"/>
    </location>
</feature>
<feature type="disulfide bond" evidence="4">
    <location>
        <begin position="79"/>
        <end position="160"/>
    </location>
</feature>
<feature type="splice variant" id="VSP_001862" description="In isoform b." evidence="10">
    <location>
        <begin position="520"/>
        <end position="532"/>
    </location>
</feature>
<gene>
    <name evidence="13" type="primary">gar-2</name>
    <name evidence="13" type="ORF">F47D12.1</name>
</gene>
<dbReference type="EMBL" id="AF272738">
    <property type="protein sequence ID" value="AAK94896.1"/>
    <property type="molecule type" value="mRNA"/>
</dbReference>
<dbReference type="EMBL" id="AY053365">
    <property type="protein sequence ID" value="AAL15153.1"/>
    <property type="molecule type" value="mRNA"/>
</dbReference>
<dbReference type="EMBL" id="FO080618">
    <property type="protein sequence ID" value="CCD83363.1"/>
    <property type="molecule type" value="Genomic_DNA"/>
</dbReference>
<dbReference type="EMBL" id="FO080618">
    <property type="protein sequence ID" value="CCD83364.1"/>
    <property type="molecule type" value="Genomic_DNA"/>
</dbReference>
<dbReference type="RefSeq" id="NP_001022593.1">
    <molecule id="Q09388-1"/>
    <property type="nucleotide sequence ID" value="NM_001027422.5"/>
</dbReference>
<dbReference type="RefSeq" id="NP_001022594.1">
    <molecule id="Q09388-2"/>
    <property type="nucleotide sequence ID" value="NM_001027423.7"/>
</dbReference>
<dbReference type="SMR" id="Q09388"/>
<dbReference type="FunCoup" id="Q09388">
    <property type="interactions" value="142"/>
</dbReference>
<dbReference type="STRING" id="6239.F47D12.1c.1"/>
<dbReference type="PaxDb" id="6239-F47D12.1c"/>
<dbReference type="EnsemblMetazoa" id="F47D12.1a.1">
    <molecule id="Q09388-1"/>
    <property type="protein sequence ID" value="F47D12.1a.1"/>
    <property type="gene ID" value="WBGene00001518"/>
</dbReference>
<dbReference type="EnsemblMetazoa" id="F47D12.1b.1">
    <molecule id="Q09388-2"/>
    <property type="protein sequence ID" value="F47D12.1b.1"/>
    <property type="gene ID" value="WBGene00001518"/>
</dbReference>
<dbReference type="GeneID" id="175893"/>
<dbReference type="KEGG" id="cel:CELE_F47D12.1"/>
<dbReference type="UCSC" id="F47D12.1d">
    <molecule id="Q09388-1"/>
    <property type="organism name" value="c. elegans"/>
</dbReference>
<dbReference type="AGR" id="WB:WBGene00001518"/>
<dbReference type="CTD" id="175893"/>
<dbReference type="WormBase" id="F47D12.1a">
    <molecule id="Q09388-1"/>
    <property type="protein sequence ID" value="CE30134"/>
    <property type="gene ID" value="WBGene00001518"/>
    <property type="gene designation" value="gar-2"/>
</dbReference>
<dbReference type="WormBase" id="F47D12.1b">
    <molecule id="Q09388-2"/>
    <property type="protein sequence ID" value="CE30135"/>
    <property type="gene ID" value="WBGene00001518"/>
    <property type="gene designation" value="gar-2"/>
</dbReference>
<dbReference type="eggNOG" id="KOG3656">
    <property type="taxonomic scope" value="Eukaryota"/>
</dbReference>
<dbReference type="InParanoid" id="Q09388"/>
<dbReference type="OrthoDB" id="10071887at2759"/>
<dbReference type="PRO" id="PR:Q09388"/>
<dbReference type="Proteomes" id="UP000001940">
    <property type="component" value="Chromosome III"/>
</dbReference>
<dbReference type="Bgee" id="WBGene00001518">
    <property type="expression patterns" value="Expressed in larva and 3 other cell types or tissues"/>
</dbReference>
<dbReference type="ExpressionAtlas" id="Q09388">
    <property type="expression patterns" value="baseline and differential"/>
</dbReference>
<dbReference type="GO" id="GO:0030424">
    <property type="term" value="C:axon"/>
    <property type="evidence" value="ECO:0000314"/>
    <property type="project" value="UniProtKB"/>
</dbReference>
<dbReference type="GO" id="GO:0030425">
    <property type="term" value="C:dendrite"/>
    <property type="evidence" value="ECO:0000318"/>
    <property type="project" value="GO_Central"/>
</dbReference>
<dbReference type="GO" id="GO:0005886">
    <property type="term" value="C:plasma membrane"/>
    <property type="evidence" value="ECO:0000318"/>
    <property type="project" value="GO_Central"/>
</dbReference>
<dbReference type="GO" id="GO:0045202">
    <property type="term" value="C:synapse"/>
    <property type="evidence" value="ECO:0000318"/>
    <property type="project" value="GO_Central"/>
</dbReference>
<dbReference type="GO" id="GO:0016907">
    <property type="term" value="F:G protein-coupled acetylcholine receptor activity"/>
    <property type="evidence" value="ECO:0000314"/>
    <property type="project" value="WormBase"/>
</dbReference>
<dbReference type="GO" id="GO:0007197">
    <property type="term" value="P:adenylate cyclase-inhibiting G protein-coupled acetylcholine receptor signaling pathway"/>
    <property type="evidence" value="ECO:0000318"/>
    <property type="project" value="GO_Central"/>
</dbReference>
<dbReference type="GO" id="GO:0007268">
    <property type="term" value="P:chemical synaptic transmission"/>
    <property type="evidence" value="ECO:0000318"/>
    <property type="project" value="GO_Central"/>
</dbReference>
<dbReference type="GO" id="GO:0007186">
    <property type="term" value="P:G protein-coupled receptor signaling pathway"/>
    <property type="evidence" value="ECO:0000314"/>
    <property type="project" value="WormBase"/>
</dbReference>
<dbReference type="GO" id="GO:0007187">
    <property type="term" value="P:G protein-coupled receptor signaling pathway, coupled to cyclic nucleotide second messenger"/>
    <property type="evidence" value="ECO:0000318"/>
    <property type="project" value="GO_Central"/>
</dbReference>
<dbReference type="GO" id="GO:0032223">
    <property type="term" value="P:negative regulation of synaptic transmission, cholinergic"/>
    <property type="evidence" value="ECO:0000315"/>
    <property type="project" value="UniProtKB"/>
</dbReference>
<dbReference type="GO" id="GO:0009410">
    <property type="term" value="P:response to xenobiotic stimulus"/>
    <property type="evidence" value="ECO:0000315"/>
    <property type="project" value="UniProtKB"/>
</dbReference>
<dbReference type="CDD" id="cd15302">
    <property type="entry name" value="7tmA_mAChR_GAR-2-like"/>
    <property type="match status" value="1"/>
</dbReference>
<dbReference type="FunFam" id="1.20.1070.10:FF:000365">
    <property type="entry name" value="Muscarinic acetylcholine receptor gar-2"/>
    <property type="match status" value="1"/>
</dbReference>
<dbReference type="Gene3D" id="1.20.1070.10">
    <property type="entry name" value="Rhodopsin 7-helix transmembrane proteins"/>
    <property type="match status" value="2"/>
</dbReference>
<dbReference type="InterPro" id="IPR000276">
    <property type="entry name" value="GPCR_Rhodpsn"/>
</dbReference>
<dbReference type="InterPro" id="IPR017452">
    <property type="entry name" value="GPCR_Rhodpsn_7TM"/>
</dbReference>
<dbReference type="InterPro" id="IPR000995">
    <property type="entry name" value="Musac_Ach_rcpt"/>
</dbReference>
<dbReference type="PANTHER" id="PTHR24247">
    <property type="entry name" value="5-HYDROXYTRYPTAMINE RECEPTOR"/>
    <property type="match status" value="1"/>
</dbReference>
<dbReference type="PANTHER" id="PTHR24247:SF191">
    <property type="entry name" value="MUSCARINIC ACETYLCHOLINE RECEPTOR, B-TYPE, ISOFORM A"/>
    <property type="match status" value="1"/>
</dbReference>
<dbReference type="Pfam" id="PF00001">
    <property type="entry name" value="7tm_1"/>
    <property type="match status" value="1"/>
</dbReference>
<dbReference type="PRINTS" id="PR00237">
    <property type="entry name" value="GPCRRHODOPSN"/>
</dbReference>
<dbReference type="PRINTS" id="PR00243">
    <property type="entry name" value="MUSCARINICR"/>
</dbReference>
<dbReference type="SMART" id="SM01381">
    <property type="entry name" value="7TM_GPCR_Srsx"/>
    <property type="match status" value="1"/>
</dbReference>
<dbReference type="SUPFAM" id="SSF81321">
    <property type="entry name" value="Family A G protein-coupled receptor-like"/>
    <property type="match status" value="1"/>
</dbReference>
<dbReference type="PROSITE" id="PS00237">
    <property type="entry name" value="G_PROTEIN_RECEP_F1_1"/>
    <property type="match status" value="1"/>
</dbReference>
<dbReference type="PROSITE" id="PS50262">
    <property type="entry name" value="G_PROTEIN_RECEP_F1_2"/>
    <property type="match status" value="1"/>
</dbReference>
<keyword id="KW-0025">Alternative splicing</keyword>
<keyword id="KW-1003">Cell membrane</keyword>
<keyword id="KW-0966">Cell projection</keyword>
<keyword id="KW-1015">Disulfide bond</keyword>
<keyword id="KW-0297">G-protein coupled receptor</keyword>
<keyword id="KW-0472">Membrane</keyword>
<keyword id="KW-0675">Receptor</keyword>
<keyword id="KW-1185">Reference proteome</keyword>
<keyword id="KW-0807">Transducer</keyword>
<keyword id="KW-0812">Transmembrane</keyword>
<keyword id="KW-1133">Transmembrane helix</keyword>
<evidence type="ECO:0000250" key="1"/>
<evidence type="ECO:0000250" key="2">
    <source>
        <dbReference type="UniProtKB" id="P08172"/>
    </source>
</evidence>
<evidence type="ECO:0000250" key="3">
    <source>
        <dbReference type="UniProtKB" id="P20309"/>
    </source>
</evidence>
<evidence type="ECO:0000255" key="4">
    <source>
        <dbReference type="PROSITE-ProRule" id="PRU00521"/>
    </source>
</evidence>
<evidence type="ECO:0000256" key="5">
    <source>
        <dbReference type="SAM" id="MobiDB-lite"/>
    </source>
</evidence>
<evidence type="ECO:0000269" key="6">
    <source>
    </source>
</evidence>
<evidence type="ECO:0000269" key="7">
    <source>
    </source>
</evidence>
<evidence type="ECO:0000269" key="8">
    <source>
    </source>
</evidence>
<evidence type="ECO:0000269" key="9">
    <source>
    </source>
</evidence>
<evidence type="ECO:0000303" key="10">
    <source>
    </source>
</evidence>
<evidence type="ECO:0000303" key="11">
    <source>
    </source>
</evidence>
<evidence type="ECO:0000305" key="12">
    <source>
    </source>
</evidence>
<evidence type="ECO:0000312" key="13">
    <source>
        <dbReference type="WormBase" id="F47D12.1a"/>
    </source>
</evidence>
<evidence type="ECO:0000312" key="14">
    <source>
        <dbReference type="WormBase" id="F47D12.1b"/>
    </source>
</evidence>
<accession>Q09388</accession>
<accession>Q09561</accession>
<accession>Q95WX7</accession>
<organism>
    <name type="scientific">Caenorhabditis elegans</name>
    <dbReference type="NCBI Taxonomy" id="6239"/>
    <lineage>
        <taxon>Eukaryota</taxon>
        <taxon>Metazoa</taxon>
        <taxon>Ecdysozoa</taxon>
        <taxon>Nematoda</taxon>
        <taxon>Chromadorea</taxon>
        <taxon>Rhabditida</taxon>
        <taxon>Rhabditina</taxon>
        <taxon>Rhabditomorpha</taxon>
        <taxon>Rhabditoidea</taxon>
        <taxon>Rhabditidae</taxon>
        <taxon>Peloderinae</taxon>
        <taxon>Caenorhabditis</taxon>
    </lineage>
</organism>
<proteinExistence type="evidence at transcript level"/>
<name>ACM2_CAEEL</name>